<name>PSME4_HUMAN</name>
<feature type="chain" id="PRO_0000280718" description="Proteasome activator complex subunit 4">
    <location>
        <begin position="1"/>
        <end position="1843"/>
    </location>
</feature>
<feature type="repeat" description="HEAT 1">
    <location>
        <begin position="475"/>
        <end position="519"/>
    </location>
</feature>
<feature type="repeat" description="HEAT 2">
    <location>
        <begin position="998"/>
        <end position="1037"/>
    </location>
</feature>
<feature type="repeat" description="HEAT 3">
    <location>
        <begin position="1179"/>
        <end position="1217"/>
    </location>
</feature>
<feature type="repeat" description="HEAT 4">
    <location>
        <begin position="1354"/>
        <end position="1392"/>
    </location>
</feature>
<feature type="repeat" description="HEAT 5">
    <location>
        <begin position="1636"/>
        <end position="1674"/>
    </location>
</feature>
<feature type="repeat" description="HEAT 6">
    <location>
        <begin position="1680"/>
        <end position="1718"/>
    </location>
</feature>
<feature type="region of interest" description="Disordered" evidence="2">
    <location>
        <begin position="1"/>
        <end position="25"/>
    </location>
</feature>
<feature type="region of interest" description="Bromodomain-like (BRDL)">
    <location>
        <begin position="1650"/>
        <end position="1738"/>
    </location>
</feature>
<feature type="compositionally biased region" description="Low complexity" evidence="2">
    <location>
        <begin position="1"/>
        <end position="11"/>
    </location>
</feature>
<feature type="compositionally biased region" description="Pro residues" evidence="2">
    <location>
        <begin position="12"/>
        <end position="22"/>
    </location>
</feature>
<feature type="modified residue" description="Phosphoserine" evidence="12 13">
    <location>
        <position position="1121"/>
    </location>
</feature>
<feature type="modified residue" description="Phosphoserine" evidence="13">
    <location>
        <position position="1614"/>
    </location>
</feature>
<feature type="modified residue" description="Phosphoserine" evidence="13">
    <location>
        <position position="1746"/>
    </location>
</feature>
<feature type="splice variant" id="VSP_023876" description="In isoform 4." evidence="7">
    <location>
        <begin position="1"/>
        <end position="1628"/>
    </location>
</feature>
<feature type="splice variant" id="VSP_023877" description="In isoform 3." evidence="9">
    <location>
        <begin position="1"/>
        <end position="856"/>
    </location>
</feature>
<feature type="splice variant" id="VSP_023878" description="In isoform 2." evidence="9">
    <location>
        <begin position="1"/>
        <end position="625"/>
    </location>
</feature>
<feature type="splice variant" id="VSP_023879" description="In isoform 3." evidence="9">
    <original>YDLSRENHREVIATV</original>
    <variation>MGENLAKKIMFFLLI</variation>
    <location>
        <begin position="857"/>
        <end position="871"/>
    </location>
</feature>
<feature type="sequence variant" id="VAR_031189" description="In dbSNP:rs2302878.">
    <original>I</original>
    <variation>V</variation>
    <location>
        <position position="872"/>
    </location>
</feature>
<feature type="sequence variant" id="VAR_031190" description="In dbSNP:rs805408.">
    <original>S</original>
    <variation>T</variation>
    <location>
        <position position="1371"/>
    </location>
</feature>
<feature type="sequence variant" id="VAR_059755" description="In dbSNP:rs35903236.">
    <original>T</original>
    <variation>A</variation>
    <location>
        <position position="1825"/>
    </location>
</feature>
<feature type="mutagenesis site" description="Abolishes binding to acetylated histones." evidence="6">
    <original>NF</original>
    <variation>TS</variation>
    <location>
        <begin position="1716"/>
        <end position="1717"/>
    </location>
</feature>
<feature type="sequence conflict" description="In Ref. 1; AAX83871." evidence="10" ref="1">
    <original>F</original>
    <variation>V</variation>
    <location>
        <position position="217"/>
    </location>
</feature>
<feature type="sequence conflict" description="In Ref. 1; AAX83871." evidence="10" ref="1">
    <original>C</original>
    <variation>R</variation>
    <location>
        <position position="710"/>
    </location>
</feature>
<feature type="sequence conflict" description="In Ref. 1; AAX83871." evidence="10" ref="1">
    <original>N</original>
    <variation>S</variation>
    <location>
        <position position="984"/>
    </location>
</feature>
<feature type="sequence conflict" description="In Ref. 2; AAH43602." evidence="10" ref="2">
    <original>L</original>
    <variation>F</variation>
    <location>
        <position position="1401"/>
    </location>
</feature>
<feature type="strand" evidence="14">
    <location>
        <begin position="29"/>
        <end position="31"/>
    </location>
</feature>
<feature type="helix" evidence="14">
    <location>
        <begin position="33"/>
        <end position="35"/>
    </location>
</feature>
<feature type="turn" evidence="14">
    <location>
        <begin position="39"/>
        <end position="42"/>
    </location>
</feature>
<feature type="helix" evidence="14">
    <location>
        <begin position="43"/>
        <end position="65"/>
    </location>
</feature>
<feature type="turn" evidence="14">
    <location>
        <begin position="68"/>
        <end position="71"/>
    </location>
</feature>
<feature type="helix" evidence="14">
    <location>
        <begin position="72"/>
        <end position="86"/>
    </location>
</feature>
<feature type="strand" evidence="17">
    <location>
        <begin position="87"/>
        <end position="90"/>
    </location>
</feature>
<feature type="helix" evidence="14">
    <location>
        <begin position="92"/>
        <end position="104"/>
    </location>
</feature>
<feature type="helix" evidence="14">
    <location>
        <begin position="113"/>
        <end position="127"/>
    </location>
</feature>
<feature type="helix" evidence="14">
    <location>
        <begin position="130"/>
        <end position="132"/>
    </location>
</feature>
<feature type="strand" evidence="14">
    <location>
        <begin position="135"/>
        <end position="137"/>
    </location>
</feature>
<feature type="helix" evidence="14">
    <location>
        <begin position="143"/>
        <end position="150"/>
    </location>
</feature>
<feature type="turn" evidence="14">
    <location>
        <begin position="158"/>
        <end position="161"/>
    </location>
</feature>
<feature type="strand" evidence="14">
    <location>
        <begin position="167"/>
        <end position="169"/>
    </location>
</feature>
<feature type="helix" evidence="14">
    <location>
        <begin position="170"/>
        <end position="180"/>
    </location>
</feature>
<feature type="helix" evidence="14">
    <location>
        <begin position="181"/>
        <end position="183"/>
    </location>
</feature>
<feature type="helix" evidence="14">
    <location>
        <begin position="188"/>
        <end position="192"/>
    </location>
</feature>
<feature type="turn" evidence="14">
    <location>
        <begin position="193"/>
        <end position="195"/>
    </location>
</feature>
<feature type="helix" evidence="14">
    <location>
        <begin position="197"/>
        <end position="199"/>
    </location>
</feature>
<feature type="strand" evidence="17">
    <location>
        <begin position="202"/>
        <end position="204"/>
    </location>
</feature>
<feature type="helix" evidence="14">
    <location>
        <begin position="206"/>
        <end position="217"/>
    </location>
</feature>
<feature type="helix" evidence="14">
    <location>
        <begin position="224"/>
        <end position="229"/>
    </location>
</feature>
<feature type="helix" evidence="14">
    <location>
        <begin position="231"/>
        <end position="233"/>
    </location>
</feature>
<feature type="helix" evidence="14">
    <location>
        <begin position="235"/>
        <end position="244"/>
    </location>
</feature>
<feature type="helix" evidence="14">
    <location>
        <begin position="250"/>
        <end position="265"/>
    </location>
</feature>
<feature type="turn" evidence="15">
    <location>
        <begin position="267"/>
        <end position="269"/>
    </location>
</feature>
<feature type="turn" evidence="14">
    <location>
        <begin position="273"/>
        <end position="275"/>
    </location>
</feature>
<feature type="helix" evidence="14">
    <location>
        <begin position="276"/>
        <end position="286"/>
    </location>
</feature>
<feature type="strand" evidence="14">
    <location>
        <begin position="292"/>
        <end position="294"/>
    </location>
</feature>
<feature type="strand" evidence="14">
    <location>
        <begin position="298"/>
        <end position="300"/>
    </location>
</feature>
<feature type="strand" evidence="14">
    <location>
        <begin position="303"/>
        <end position="305"/>
    </location>
</feature>
<feature type="helix" evidence="14">
    <location>
        <begin position="308"/>
        <end position="318"/>
    </location>
</feature>
<feature type="helix" evidence="14">
    <location>
        <begin position="326"/>
        <end position="336"/>
    </location>
</feature>
<feature type="turn" evidence="14">
    <location>
        <begin position="338"/>
        <end position="341"/>
    </location>
</feature>
<feature type="helix" evidence="14">
    <location>
        <begin position="343"/>
        <end position="345"/>
    </location>
</feature>
<feature type="helix" evidence="14">
    <location>
        <begin position="350"/>
        <end position="371"/>
    </location>
</feature>
<feature type="helix" evidence="14">
    <location>
        <begin position="384"/>
        <end position="386"/>
    </location>
</feature>
<feature type="helix" evidence="14">
    <location>
        <begin position="390"/>
        <end position="408"/>
    </location>
</feature>
<feature type="helix" evidence="14">
    <location>
        <begin position="415"/>
        <end position="427"/>
    </location>
</feature>
<feature type="helix" evidence="14">
    <location>
        <begin position="429"/>
        <end position="438"/>
    </location>
</feature>
<feature type="helix" evidence="14">
    <location>
        <begin position="440"/>
        <end position="443"/>
    </location>
</feature>
<feature type="helix" evidence="14">
    <location>
        <begin position="451"/>
        <end position="461"/>
    </location>
</feature>
<feature type="helix" evidence="14">
    <location>
        <begin position="464"/>
        <end position="467"/>
    </location>
</feature>
<feature type="strand" evidence="16">
    <location>
        <begin position="472"/>
        <end position="474"/>
    </location>
</feature>
<feature type="helix" evidence="14">
    <location>
        <begin position="477"/>
        <end position="480"/>
    </location>
</feature>
<feature type="helix" evidence="14">
    <location>
        <begin position="481"/>
        <end position="487"/>
    </location>
</feature>
<feature type="helix" evidence="14">
    <location>
        <begin position="489"/>
        <end position="491"/>
    </location>
</feature>
<feature type="helix" evidence="14">
    <location>
        <begin position="497"/>
        <end position="507"/>
    </location>
</feature>
<feature type="turn" evidence="14">
    <location>
        <begin position="508"/>
        <end position="513"/>
    </location>
</feature>
<feature type="strand" evidence="15">
    <location>
        <begin position="520"/>
        <end position="525"/>
    </location>
</feature>
<feature type="helix" evidence="14">
    <location>
        <begin position="531"/>
        <end position="537"/>
    </location>
</feature>
<feature type="helix" evidence="14">
    <location>
        <begin position="540"/>
        <end position="543"/>
    </location>
</feature>
<feature type="helix" evidence="14">
    <location>
        <begin position="544"/>
        <end position="547"/>
    </location>
</feature>
<feature type="helix" evidence="14">
    <location>
        <begin position="549"/>
        <end position="559"/>
    </location>
</feature>
<feature type="turn" evidence="14">
    <location>
        <begin position="577"/>
        <end position="583"/>
    </location>
</feature>
<feature type="helix" evidence="14">
    <location>
        <begin position="584"/>
        <end position="595"/>
    </location>
</feature>
<feature type="helix" evidence="14">
    <location>
        <begin position="599"/>
        <end position="615"/>
    </location>
</feature>
<feature type="turn" evidence="14">
    <location>
        <begin position="620"/>
        <end position="622"/>
    </location>
</feature>
<feature type="helix" evidence="14">
    <location>
        <begin position="623"/>
        <end position="637"/>
    </location>
</feature>
<feature type="helix" evidence="14">
    <location>
        <begin position="639"/>
        <end position="657"/>
    </location>
</feature>
<feature type="turn" evidence="16">
    <location>
        <begin position="658"/>
        <end position="660"/>
    </location>
</feature>
<feature type="strand" evidence="14">
    <location>
        <begin position="661"/>
        <end position="665"/>
    </location>
</feature>
<feature type="helix" evidence="14">
    <location>
        <begin position="672"/>
        <end position="683"/>
    </location>
</feature>
<feature type="helix" evidence="14">
    <location>
        <begin position="689"/>
        <end position="691"/>
    </location>
</feature>
<feature type="helix" evidence="14">
    <location>
        <begin position="696"/>
        <end position="699"/>
    </location>
</feature>
<feature type="helix" evidence="14">
    <location>
        <begin position="702"/>
        <end position="705"/>
    </location>
</feature>
<feature type="turn" evidence="14">
    <location>
        <begin position="711"/>
        <end position="713"/>
    </location>
</feature>
<feature type="helix" evidence="14">
    <location>
        <begin position="715"/>
        <end position="729"/>
    </location>
</feature>
<feature type="strand" evidence="14">
    <location>
        <begin position="732"/>
        <end position="734"/>
    </location>
</feature>
<feature type="strand" evidence="15">
    <location>
        <begin position="743"/>
        <end position="746"/>
    </location>
</feature>
<feature type="turn" evidence="15">
    <location>
        <begin position="747"/>
        <end position="749"/>
    </location>
</feature>
<feature type="helix" evidence="14">
    <location>
        <begin position="752"/>
        <end position="754"/>
    </location>
</feature>
<feature type="strand" evidence="14">
    <location>
        <begin position="762"/>
        <end position="764"/>
    </location>
</feature>
<feature type="helix" evidence="14">
    <location>
        <begin position="774"/>
        <end position="787"/>
    </location>
</feature>
<feature type="helix" evidence="14">
    <location>
        <begin position="789"/>
        <end position="799"/>
    </location>
</feature>
<feature type="helix" evidence="14">
    <location>
        <begin position="807"/>
        <end position="823"/>
    </location>
</feature>
<feature type="turn" evidence="14">
    <location>
        <begin position="825"/>
        <end position="827"/>
    </location>
</feature>
<feature type="strand" evidence="15">
    <location>
        <begin position="837"/>
        <end position="839"/>
    </location>
</feature>
<feature type="strand" evidence="14">
    <location>
        <begin position="859"/>
        <end position="861"/>
    </location>
</feature>
<feature type="helix" evidence="14">
    <location>
        <begin position="864"/>
        <end position="882"/>
    </location>
</feature>
<feature type="helix" evidence="14">
    <location>
        <begin position="889"/>
        <end position="900"/>
    </location>
</feature>
<feature type="strand" evidence="14">
    <location>
        <begin position="904"/>
        <end position="906"/>
    </location>
</feature>
<feature type="helix" evidence="14">
    <location>
        <begin position="908"/>
        <end position="924"/>
    </location>
</feature>
<feature type="turn" evidence="17">
    <location>
        <begin position="928"/>
        <end position="930"/>
    </location>
</feature>
<feature type="helix" evidence="15">
    <location>
        <begin position="932"/>
        <end position="934"/>
    </location>
</feature>
<feature type="helix" evidence="14">
    <location>
        <begin position="937"/>
        <end position="953"/>
    </location>
</feature>
<feature type="helix" evidence="14">
    <location>
        <begin position="963"/>
        <end position="975"/>
    </location>
</feature>
<feature type="strand" evidence="14">
    <location>
        <begin position="976"/>
        <end position="978"/>
    </location>
</feature>
<feature type="helix" evidence="14">
    <location>
        <begin position="980"/>
        <end position="994"/>
    </location>
</feature>
<feature type="turn" evidence="14">
    <location>
        <begin position="1001"/>
        <end position="1003"/>
    </location>
</feature>
<feature type="helix" evidence="14">
    <location>
        <begin position="1005"/>
        <end position="1008"/>
    </location>
</feature>
<feature type="turn" evidence="14">
    <location>
        <begin position="1009"/>
        <end position="1012"/>
    </location>
</feature>
<feature type="strand" evidence="14">
    <location>
        <begin position="1014"/>
        <end position="1016"/>
    </location>
</feature>
<feature type="helix" evidence="14">
    <location>
        <begin position="1021"/>
        <end position="1032"/>
    </location>
</feature>
<feature type="strand" evidence="15">
    <location>
        <begin position="1035"/>
        <end position="1037"/>
    </location>
</feature>
<feature type="strand" evidence="14">
    <location>
        <begin position="1040"/>
        <end position="1042"/>
    </location>
</feature>
<feature type="strand" evidence="14">
    <location>
        <begin position="1044"/>
        <end position="1046"/>
    </location>
</feature>
<feature type="helix" evidence="14">
    <location>
        <begin position="1049"/>
        <end position="1058"/>
    </location>
</feature>
<feature type="helix" evidence="17">
    <location>
        <begin position="1059"/>
        <end position="1061"/>
    </location>
</feature>
<feature type="strand" evidence="15">
    <location>
        <begin position="1062"/>
        <end position="1064"/>
    </location>
</feature>
<feature type="helix" evidence="14">
    <location>
        <begin position="1070"/>
        <end position="1086"/>
    </location>
</feature>
<feature type="helix" evidence="14">
    <location>
        <begin position="1100"/>
        <end position="1105"/>
    </location>
</feature>
<feature type="turn" evidence="14">
    <location>
        <begin position="1122"/>
        <end position="1126"/>
    </location>
</feature>
<feature type="helix" evidence="14">
    <location>
        <begin position="1127"/>
        <end position="1135"/>
    </location>
</feature>
<feature type="helix" evidence="14">
    <location>
        <begin position="1138"/>
        <end position="1154"/>
    </location>
</feature>
<feature type="strand" evidence="16">
    <location>
        <begin position="1155"/>
        <end position="1158"/>
    </location>
</feature>
<feature type="helix" evidence="14">
    <location>
        <begin position="1161"/>
        <end position="1172"/>
    </location>
</feature>
<feature type="strand" evidence="14">
    <location>
        <begin position="1177"/>
        <end position="1179"/>
    </location>
</feature>
<feature type="helix" evidence="14">
    <location>
        <begin position="1183"/>
        <end position="1191"/>
    </location>
</feature>
<feature type="helix" evidence="17">
    <location>
        <begin position="1192"/>
        <end position="1194"/>
    </location>
</feature>
<feature type="helix" evidence="14">
    <location>
        <begin position="1198"/>
        <end position="1214"/>
    </location>
</feature>
<feature type="strand" evidence="15">
    <location>
        <begin position="1221"/>
        <end position="1224"/>
    </location>
</feature>
<feature type="turn" evidence="14">
    <location>
        <begin position="1226"/>
        <end position="1228"/>
    </location>
</feature>
<feature type="strand" evidence="14">
    <location>
        <begin position="1240"/>
        <end position="1242"/>
    </location>
</feature>
<feature type="turn" evidence="14">
    <location>
        <begin position="1244"/>
        <end position="1246"/>
    </location>
</feature>
<feature type="helix" evidence="14">
    <location>
        <begin position="1247"/>
        <end position="1249"/>
    </location>
</feature>
<feature type="turn" evidence="17">
    <location>
        <begin position="1253"/>
        <end position="1255"/>
    </location>
</feature>
<feature type="helix" evidence="14">
    <location>
        <begin position="1260"/>
        <end position="1264"/>
    </location>
</feature>
<feature type="strand" evidence="14">
    <location>
        <begin position="1271"/>
        <end position="1273"/>
    </location>
</feature>
<feature type="strand" evidence="15">
    <location>
        <begin position="1281"/>
        <end position="1286"/>
    </location>
</feature>
<feature type="turn" evidence="14">
    <location>
        <begin position="1289"/>
        <end position="1291"/>
    </location>
</feature>
<feature type="strand" evidence="14">
    <location>
        <begin position="1299"/>
        <end position="1302"/>
    </location>
</feature>
<feature type="helix" evidence="14">
    <location>
        <begin position="1306"/>
        <end position="1313"/>
    </location>
</feature>
<feature type="helix" evidence="14">
    <location>
        <begin position="1316"/>
        <end position="1325"/>
    </location>
</feature>
<feature type="turn" evidence="14">
    <location>
        <begin position="1332"/>
        <end position="1334"/>
    </location>
</feature>
<feature type="helix" evidence="14">
    <location>
        <begin position="1339"/>
        <end position="1351"/>
    </location>
</feature>
<feature type="helix" evidence="14">
    <location>
        <begin position="1356"/>
        <end position="1367"/>
    </location>
</feature>
<feature type="helix" evidence="14">
    <location>
        <begin position="1374"/>
        <end position="1389"/>
    </location>
</feature>
<feature type="helix" evidence="14">
    <location>
        <begin position="1390"/>
        <end position="1392"/>
    </location>
</feature>
<feature type="helix" evidence="14">
    <location>
        <begin position="1395"/>
        <end position="1414"/>
    </location>
</feature>
<feature type="turn" evidence="14">
    <location>
        <begin position="1418"/>
        <end position="1420"/>
    </location>
</feature>
<feature type="helix" evidence="14">
    <location>
        <begin position="1421"/>
        <end position="1431"/>
    </location>
</feature>
<feature type="strand" evidence="14">
    <location>
        <begin position="1433"/>
        <end position="1435"/>
    </location>
</feature>
<feature type="turn" evidence="14">
    <location>
        <begin position="1437"/>
        <end position="1439"/>
    </location>
</feature>
<feature type="helix" evidence="14">
    <location>
        <begin position="1442"/>
        <end position="1447"/>
    </location>
</feature>
<feature type="strand" evidence="15">
    <location>
        <begin position="1451"/>
        <end position="1453"/>
    </location>
</feature>
<feature type="helix" evidence="14">
    <location>
        <begin position="1460"/>
        <end position="1474"/>
    </location>
</feature>
<feature type="turn" evidence="14">
    <location>
        <begin position="1475"/>
        <end position="1477"/>
    </location>
</feature>
<feature type="helix" evidence="14">
    <location>
        <begin position="1480"/>
        <end position="1490"/>
    </location>
</feature>
<feature type="helix" evidence="14">
    <location>
        <begin position="1491"/>
        <end position="1493"/>
    </location>
</feature>
<feature type="strand" evidence="14">
    <location>
        <begin position="1494"/>
        <end position="1496"/>
    </location>
</feature>
<feature type="helix" evidence="14">
    <location>
        <begin position="1499"/>
        <end position="1512"/>
    </location>
</feature>
<feature type="helix" evidence="14">
    <location>
        <begin position="1530"/>
        <end position="1540"/>
    </location>
</feature>
<feature type="helix" evidence="14">
    <location>
        <begin position="1542"/>
        <end position="1544"/>
    </location>
</feature>
<feature type="helix" evidence="14">
    <location>
        <begin position="1568"/>
        <end position="1584"/>
    </location>
</feature>
<feature type="turn" evidence="14">
    <location>
        <begin position="1585"/>
        <end position="1587"/>
    </location>
</feature>
<feature type="strand" evidence="14">
    <location>
        <begin position="1588"/>
        <end position="1590"/>
    </location>
</feature>
<feature type="strand" evidence="14">
    <location>
        <begin position="1596"/>
        <end position="1599"/>
    </location>
</feature>
<feature type="helix" evidence="14">
    <location>
        <begin position="1600"/>
        <end position="1604"/>
    </location>
</feature>
<feature type="turn" evidence="14">
    <location>
        <begin position="1616"/>
        <end position="1618"/>
    </location>
</feature>
<feature type="helix" evidence="14">
    <location>
        <begin position="1619"/>
        <end position="1630"/>
    </location>
</feature>
<feature type="turn" evidence="14">
    <location>
        <begin position="1636"/>
        <end position="1638"/>
    </location>
</feature>
<feature type="helix" evidence="14">
    <location>
        <begin position="1639"/>
        <end position="1648"/>
    </location>
</feature>
<feature type="strand" evidence="14">
    <location>
        <begin position="1651"/>
        <end position="1653"/>
    </location>
</feature>
<feature type="helix" evidence="14">
    <location>
        <begin position="1655"/>
        <end position="1670"/>
    </location>
</feature>
<feature type="helix" evidence="14">
    <location>
        <begin position="1673"/>
        <end position="1677"/>
    </location>
</feature>
<feature type="helix" evidence="14">
    <location>
        <begin position="1680"/>
        <end position="1693"/>
    </location>
</feature>
<feature type="helix" evidence="14">
    <location>
        <begin position="1699"/>
        <end position="1714"/>
    </location>
</feature>
<feature type="helix" evidence="14">
    <location>
        <begin position="1722"/>
        <end position="1732"/>
    </location>
</feature>
<feature type="strand" evidence="14">
    <location>
        <begin position="1742"/>
        <end position="1744"/>
    </location>
</feature>
<feature type="helix" evidence="14">
    <location>
        <begin position="1756"/>
        <end position="1771"/>
    </location>
</feature>
<feature type="strand" evidence="17">
    <location>
        <begin position="1773"/>
        <end position="1775"/>
    </location>
</feature>
<feature type="helix" evidence="14">
    <location>
        <begin position="1781"/>
        <end position="1789"/>
    </location>
</feature>
<feature type="strand" evidence="14">
    <location>
        <begin position="1792"/>
        <end position="1794"/>
    </location>
</feature>
<feature type="helix" evidence="14">
    <location>
        <begin position="1798"/>
        <end position="1812"/>
    </location>
</feature>
<feature type="helix" evidence="16">
    <location>
        <begin position="1814"/>
        <end position="1816"/>
    </location>
</feature>
<feature type="helix" evidence="14">
    <location>
        <begin position="1817"/>
        <end position="1820"/>
    </location>
</feature>
<feature type="helix" evidence="14">
    <location>
        <begin position="1821"/>
        <end position="1823"/>
    </location>
</feature>
<feature type="helix" evidence="14">
    <location>
        <begin position="1826"/>
        <end position="1833"/>
    </location>
</feature>
<feature type="turn" evidence="15">
    <location>
        <begin position="1840"/>
        <end position="1842"/>
    </location>
</feature>
<accession>Q14997</accession>
<accession>Q1XBG4</accession>
<accession>Q1XBG5</accession>
<accession>Q1XBG6</accession>
<accession>Q2M1Z0</accession>
<accession>Q6IPR2</accession>
<accession>Q86XF8</accession>
<reference key="1">
    <citation type="submission" date="2005-01" db="EMBL/GenBank/DDBJ databases">
        <title>Proteasomes and Proteasome Activator 200kD (PA200) accumulate on chromatin in response to ionizing radiation.</title>
        <authorList>
            <person name="Blickwedehl J."/>
            <person name="McEvoy S."/>
            <person name="Wong I."/>
            <person name="Kousis P."/>
            <person name="Cresswell P."/>
            <person name="Liang P."/>
            <person name="Bangia N."/>
        </authorList>
    </citation>
    <scope>NUCLEOTIDE SEQUENCE [MRNA] (ISOFORMS 2 AND 3)</scope>
    <scope>NUCLEOTIDE SEQUENCE [MRNA] OF 1-1210 (ISOFORM 1)</scope>
</reference>
<reference key="2">
    <citation type="journal article" date="2004" name="Genome Res.">
        <title>The status, quality, and expansion of the NIH full-length cDNA project: the Mammalian Gene Collection (MGC).</title>
        <authorList>
            <consortium name="The MGC Project Team"/>
        </authorList>
    </citation>
    <scope>NUCLEOTIDE SEQUENCE [LARGE SCALE MRNA] (ISOFORM 4)</scope>
    <scope>NUCLEOTIDE SEQUENCE [LARGE SCALE MRNA] OF 104-1843 (ISOFORM 1)</scope>
    <source>
        <tissue>Brain</tissue>
        <tissue>Mammary gland</tissue>
        <tissue>Skeletal muscle</tissue>
    </source>
</reference>
<reference key="3">
    <citation type="journal article" date="1994" name="DNA Res.">
        <title>Prediction of the coding sequences of unidentified human genes. II. The coding sequences of 40 new genes (KIAA0041-KIAA0080) deduced by analysis of cDNA clones from human cell line KG-1.</title>
        <authorList>
            <person name="Nomura N."/>
            <person name="Nagase T."/>
            <person name="Miyajima N."/>
            <person name="Sazuka T."/>
            <person name="Tanaka A."/>
            <person name="Sato S."/>
            <person name="Seki N."/>
            <person name="Kawarabayasi Y."/>
            <person name="Ishikawa K."/>
            <person name="Tabata S."/>
        </authorList>
    </citation>
    <scope>NUCLEOTIDE SEQUENCE [LARGE SCALE MRNA] OF 46-1843 (ISOFORM 1)</scope>
    <source>
        <tissue>Bone marrow</tissue>
    </source>
</reference>
<reference key="4">
    <citation type="journal article" date="2002" name="EMBO J.">
        <title>PA200, a nuclear proteasome activator involved in DNA repair.</title>
        <authorList>
            <person name="Ustrell V."/>
            <person name="Hoffman L."/>
            <person name="Pratt G."/>
            <person name="Rechsteiner M."/>
        </authorList>
    </citation>
    <scope>IDENTIFICATION</scope>
    <scope>FUNCTION</scope>
    <scope>SUBUNIT</scope>
    <scope>INTERACTION WITH PROTEASOMES 20S AND 26S</scope>
    <scope>PHOSPHORYLATION</scope>
    <scope>SUBCELLULAR LOCATION</scope>
</reference>
<reference key="5">
    <citation type="journal article" date="2007" name="Biochemistry">
        <title>Mass spectrometric characterization of the affinity-purified human 26S proteasome complex.</title>
        <authorList>
            <person name="Wang X."/>
            <person name="Chen C.-F."/>
            <person name="Baker P.R."/>
            <person name="Chen P.-L."/>
            <person name="Kaiser P."/>
            <person name="Huang L."/>
        </authorList>
    </citation>
    <scope>IDENTIFICATION BY MASS SPECTROMETRY [LARGE SCALE ANALYSIS]</scope>
    <source>
        <tissue>Embryonic kidney</tissue>
    </source>
</reference>
<reference key="6">
    <citation type="journal article" date="2008" name="Proc. Natl. Acad. Sci. U.S.A.">
        <title>A quantitative atlas of mitotic phosphorylation.</title>
        <authorList>
            <person name="Dephoure N."/>
            <person name="Zhou C."/>
            <person name="Villen J."/>
            <person name="Beausoleil S.A."/>
            <person name="Bakalarski C.E."/>
            <person name="Elledge S.J."/>
            <person name="Gygi S.P."/>
        </authorList>
    </citation>
    <scope>PHOSPHORYLATION [LARGE SCALE ANALYSIS] AT SER-1121</scope>
    <scope>IDENTIFICATION BY MASS SPECTROMETRY [LARGE SCALE ANALYSIS]</scope>
    <source>
        <tissue>Cervix carcinoma</tissue>
    </source>
</reference>
<reference key="7">
    <citation type="journal article" date="2008" name="Proc. Natl. Acad. Sci. U.S.A.">
        <title>Role for proteasome activator PA200 and postglutamyl proteasome activity in genomic stability.</title>
        <authorList>
            <person name="Blickwedehl J."/>
            <person name="Agarwal M."/>
            <person name="Seong C."/>
            <person name="Pandita R.K."/>
            <person name="Melendy T."/>
            <person name="Sung P."/>
            <person name="Pandita T.K."/>
            <person name="Bangia N."/>
        </authorList>
    </citation>
    <scope>FUNCTION</scope>
</reference>
<reference key="8">
    <citation type="journal article" date="2011" name="BMC Syst. Biol.">
        <title>Initial characterization of the human central proteome.</title>
        <authorList>
            <person name="Burkard T.R."/>
            <person name="Planyavsky M."/>
            <person name="Kaupe I."/>
            <person name="Breitwieser F.P."/>
            <person name="Buerckstuemmer T."/>
            <person name="Bennett K.L."/>
            <person name="Superti-Furga G."/>
            <person name="Colinge J."/>
        </authorList>
    </citation>
    <scope>IDENTIFICATION BY MASS SPECTROMETRY [LARGE SCALE ANALYSIS]</scope>
</reference>
<reference key="9">
    <citation type="journal article" date="2012" name="Mol. Cancer Res.">
        <title>The proteasome activator PA200 regulates tumor cell responsiveness to glutamine and resistance to ionizing radiation.</title>
        <authorList>
            <person name="Blickwedehl J."/>
            <person name="Olejniczak S."/>
            <person name="Cummings R."/>
            <person name="Sarvaiya N."/>
            <person name="Mantilla A."/>
            <person name="Chanan-Khan A."/>
            <person name="Pandita T.K."/>
            <person name="Schmidt M."/>
            <person name="Thompson C.B."/>
            <person name="Bangia N."/>
        </authorList>
    </citation>
    <scope>FUNCTION</scope>
</reference>
<reference key="10">
    <citation type="journal article" date="2013" name="Annu. Rev. Biochem.">
        <title>Molecular architecture and assembly of the eukaryotic proteasome.</title>
        <authorList>
            <person name="Tomko R.J. Jr."/>
            <person name="Hochstrasser M."/>
        </authorList>
    </citation>
    <scope>NOMENCLATURE</scope>
</reference>
<reference key="11">
    <citation type="journal article" date="2013" name="Cell">
        <title>Acetylation-mediated proteasomal degradation of core histones during DNA repair and spermatogenesis.</title>
        <authorList>
            <person name="Qian M.X."/>
            <person name="Pang Y."/>
            <person name="Liu C.H."/>
            <person name="Haratake K."/>
            <person name="Du B.Y."/>
            <person name="Ji D.Y."/>
            <person name="Wang G.F."/>
            <person name="Zhu Q.Q."/>
            <person name="Song W."/>
            <person name="Yu Y."/>
            <person name="Zhang X.X."/>
            <person name="Huang H.T."/>
            <person name="Miao S."/>
            <person name="Chen L.B."/>
            <person name="Zhang Z.H."/>
            <person name="Liang Y.N."/>
            <person name="Liu S."/>
            <person name="Cha H."/>
            <person name="Yang D."/>
            <person name="Zhai Y."/>
            <person name="Komatsu T."/>
            <person name="Tsuruta F."/>
            <person name="Li H."/>
            <person name="Cao C."/>
            <person name="Li W."/>
            <person name="Li G.H."/>
            <person name="Cheng Y."/>
            <person name="Chiba T."/>
            <person name="Wang L."/>
            <person name="Goldberg A.L."/>
            <person name="Shen Y."/>
            <person name="Qiu X.B."/>
        </authorList>
    </citation>
    <scope>FUNCTION</scope>
    <scope>MUTAGENESIS OF 1716-ASN-PHE-1717</scope>
</reference>
<reference key="12">
    <citation type="journal article" date="2013" name="J. Proteome Res.">
        <title>Toward a comprehensive characterization of a human cancer cell phosphoproteome.</title>
        <authorList>
            <person name="Zhou H."/>
            <person name="Di Palma S."/>
            <person name="Preisinger C."/>
            <person name="Peng M."/>
            <person name="Polat A.N."/>
            <person name="Heck A.J."/>
            <person name="Mohammed S."/>
        </authorList>
    </citation>
    <scope>PHOSPHORYLATION [LARGE SCALE ANALYSIS] AT SER-1121; SER-1614 AND SER-1746</scope>
    <scope>IDENTIFICATION BY MASS SPECTROMETRY [LARGE SCALE ANALYSIS]</scope>
    <source>
        <tissue>Cervix carcinoma</tissue>
        <tissue>Erythroleukemia</tissue>
    </source>
</reference>
<protein>
    <recommendedName>
        <fullName>Proteasome activator complex subunit 4</fullName>
    </recommendedName>
    <alternativeName>
        <fullName evidence="8">Proteasome activator PA200</fullName>
    </alternativeName>
    <alternativeName>
        <fullName evidence="8">Protein BLM10 homolog</fullName>
        <shortName evidence="8">Blm10</shortName>
        <shortName evidence="8">hBlm10</shortName>
    </alternativeName>
</protein>
<dbReference type="EMBL" id="AY894754">
    <property type="protein sequence ID" value="AAX83869.1"/>
    <property type="molecule type" value="mRNA"/>
</dbReference>
<dbReference type="EMBL" id="AY894755">
    <property type="protein sequence ID" value="AAX83870.1"/>
    <property type="molecule type" value="mRNA"/>
</dbReference>
<dbReference type="EMBL" id="AY894756">
    <property type="protein sequence ID" value="AAX83871.1"/>
    <property type="molecule type" value="mRNA"/>
</dbReference>
<dbReference type="EMBL" id="BC043602">
    <property type="protein sequence ID" value="AAH43602.1"/>
    <property type="molecule type" value="mRNA"/>
</dbReference>
<dbReference type="EMBL" id="BC071768">
    <property type="protein sequence ID" value="AAH71768.1"/>
    <property type="molecule type" value="mRNA"/>
</dbReference>
<dbReference type="EMBL" id="BC112169">
    <property type="protein sequence ID" value="AAI12170.1"/>
    <property type="status" value="ALT_INIT"/>
    <property type="molecule type" value="mRNA"/>
</dbReference>
<dbReference type="EMBL" id="BC113668">
    <property type="protein sequence ID" value="AAI13669.1"/>
    <property type="status" value="ALT_INIT"/>
    <property type="molecule type" value="mRNA"/>
</dbReference>
<dbReference type="EMBL" id="D38521">
    <property type="protein sequence ID" value="BAA07526.1"/>
    <property type="molecule type" value="mRNA"/>
</dbReference>
<dbReference type="CCDS" id="CCDS33197.2">
    <molecule id="Q14997-1"/>
</dbReference>
<dbReference type="RefSeq" id="NP_055429.2">
    <molecule id="Q14997-1"/>
    <property type="nucleotide sequence ID" value="NM_014614.3"/>
</dbReference>
<dbReference type="PDB" id="6KWX">
    <property type="method" value="EM"/>
    <property type="resolution" value="3.75 A"/>
    <property type="chains" value="A=1-1843"/>
</dbReference>
<dbReference type="PDB" id="6KWY">
    <property type="method" value="EM"/>
    <property type="resolution" value="2.72 A"/>
    <property type="chains" value="c=1-1843"/>
</dbReference>
<dbReference type="PDB" id="6REY">
    <property type="method" value="EM"/>
    <property type="resolution" value="3.00 A"/>
    <property type="chains" value="c/d=1-1843"/>
</dbReference>
<dbReference type="PDB" id="7NAQ">
    <property type="method" value="EM"/>
    <property type="resolution" value="3.20 A"/>
    <property type="chains" value="c=1-1843"/>
</dbReference>
<dbReference type="PDB" id="8CVS">
    <property type="method" value="EM"/>
    <property type="resolution" value="3.10 A"/>
    <property type="chains" value="c=1-1843"/>
</dbReference>
<dbReference type="PDBsum" id="6KWX"/>
<dbReference type="PDBsum" id="6KWY"/>
<dbReference type="PDBsum" id="6REY"/>
<dbReference type="PDBsum" id="7NAQ"/>
<dbReference type="PDBsum" id="8CVS"/>
<dbReference type="EMDB" id="EMD-0780"/>
<dbReference type="EMDB" id="EMD-0781"/>
<dbReference type="EMDB" id="EMD-24278"/>
<dbReference type="EMDB" id="EMD-27015"/>
<dbReference type="EMDB" id="EMD-4860"/>
<dbReference type="SMR" id="Q14997"/>
<dbReference type="BioGRID" id="116807">
    <property type="interactions" value="105"/>
</dbReference>
<dbReference type="ComplexPortal" id="CPX-8841">
    <property type="entry name" value="PA200-20S single-capped proteasome"/>
</dbReference>
<dbReference type="ComplexPortal" id="CPX-9063">
    <property type="entry name" value="PA200-20S-PA200 double-capped proteasome complex"/>
</dbReference>
<dbReference type="DIP" id="DIP-38203N"/>
<dbReference type="FunCoup" id="Q14997">
    <property type="interactions" value="2612"/>
</dbReference>
<dbReference type="IntAct" id="Q14997">
    <property type="interactions" value="73"/>
</dbReference>
<dbReference type="MINT" id="Q14997"/>
<dbReference type="STRING" id="9606.ENSP00000384211"/>
<dbReference type="GlyGen" id="Q14997">
    <property type="glycosylation" value="2 sites, 1 O-linked glycan (2 sites)"/>
</dbReference>
<dbReference type="iPTMnet" id="Q14997"/>
<dbReference type="PhosphoSitePlus" id="Q14997"/>
<dbReference type="SwissPalm" id="Q14997"/>
<dbReference type="BioMuta" id="PSME4"/>
<dbReference type="DMDM" id="134034993"/>
<dbReference type="jPOST" id="Q14997"/>
<dbReference type="MassIVE" id="Q14997"/>
<dbReference type="PaxDb" id="9606-ENSP00000384211"/>
<dbReference type="PeptideAtlas" id="Q14997"/>
<dbReference type="ProteomicsDB" id="60286">
    <molecule id="Q14997-1"/>
</dbReference>
<dbReference type="ProteomicsDB" id="60287">
    <molecule id="Q14997-2"/>
</dbReference>
<dbReference type="ProteomicsDB" id="60288">
    <molecule id="Q14997-3"/>
</dbReference>
<dbReference type="ProteomicsDB" id="60289">
    <molecule id="Q14997-4"/>
</dbReference>
<dbReference type="Pumba" id="Q14997"/>
<dbReference type="Antibodypedia" id="30226">
    <property type="antibodies" value="105 antibodies from 23 providers"/>
</dbReference>
<dbReference type="DNASU" id="23198"/>
<dbReference type="Ensembl" id="ENST00000404125.6">
    <molecule id="Q14997-1"/>
    <property type="protein sequence ID" value="ENSP00000384211.1"/>
    <property type="gene ID" value="ENSG00000068878.15"/>
</dbReference>
<dbReference type="GeneID" id="23198"/>
<dbReference type="KEGG" id="hsa:23198"/>
<dbReference type="MANE-Select" id="ENST00000404125.6">
    <property type="protein sequence ID" value="ENSP00000384211.1"/>
    <property type="RefSeq nucleotide sequence ID" value="NM_014614.3"/>
    <property type="RefSeq protein sequence ID" value="NP_055429.2"/>
</dbReference>
<dbReference type="UCSC" id="uc002rxp.2">
    <molecule id="Q14997-1"/>
    <property type="organism name" value="human"/>
</dbReference>
<dbReference type="AGR" id="HGNC:20635"/>
<dbReference type="CTD" id="23198"/>
<dbReference type="DisGeNET" id="23198"/>
<dbReference type="GeneCards" id="PSME4"/>
<dbReference type="HGNC" id="HGNC:20635">
    <property type="gene designation" value="PSME4"/>
</dbReference>
<dbReference type="HPA" id="ENSG00000068878">
    <property type="expression patterns" value="Tissue enhanced (skeletal)"/>
</dbReference>
<dbReference type="MIM" id="607705">
    <property type="type" value="gene"/>
</dbReference>
<dbReference type="neXtProt" id="NX_Q14997"/>
<dbReference type="OpenTargets" id="ENSG00000068878"/>
<dbReference type="PharmGKB" id="PA134872587"/>
<dbReference type="VEuPathDB" id="HostDB:ENSG00000068878"/>
<dbReference type="eggNOG" id="KOG1851">
    <property type="taxonomic scope" value="Eukaryota"/>
</dbReference>
<dbReference type="GeneTree" id="ENSGT00390000011433"/>
<dbReference type="HOGENOM" id="CLU_000772_2_0_1"/>
<dbReference type="InParanoid" id="Q14997"/>
<dbReference type="OMA" id="ECTQLVP"/>
<dbReference type="OrthoDB" id="17907at2759"/>
<dbReference type="PAN-GO" id="Q14997">
    <property type="GO annotations" value="8 GO annotations based on evolutionary models"/>
</dbReference>
<dbReference type="PhylomeDB" id="Q14997"/>
<dbReference type="TreeFam" id="TF106237"/>
<dbReference type="PathwayCommons" id="Q14997"/>
<dbReference type="Reactome" id="R-HSA-9907900">
    <property type="pathway name" value="Proteasome assembly"/>
</dbReference>
<dbReference type="SignaLink" id="Q14997"/>
<dbReference type="BioGRID-ORCS" id="23198">
    <property type="hits" value="19 hits in 1166 CRISPR screens"/>
</dbReference>
<dbReference type="ChiTaRS" id="PSME4">
    <property type="organism name" value="human"/>
</dbReference>
<dbReference type="GeneWiki" id="PSME4"/>
<dbReference type="GenomeRNAi" id="23198"/>
<dbReference type="Pharos" id="Q14997">
    <property type="development level" value="Tbio"/>
</dbReference>
<dbReference type="PRO" id="PR:Q14997"/>
<dbReference type="Proteomes" id="UP000005640">
    <property type="component" value="Chromosome 2"/>
</dbReference>
<dbReference type="RNAct" id="Q14997">
    <property type="molecule type" value="protein"/>
</dbReference>
<dbReference type="Bgee" id="ENSG00000068878">
    <property type="expression patterns" value="Expressed in sperm and 205 other cell types or tissues"/>
</dbReference>
<dbReference type="ExpressionAtlas" id="Q14997">
    <property type="expression patterns" value="baseline and differential"/>
</dbReference>
<dbReference type="GO" id="GO:0005829">
    <property type="term" value="C:cytosol"/>
    <property type="evidence" value="ECO:0000250"/>
    <property type="project" value="UniProtKB"/>
</dbReference>
<dbReference type="GO" id="GO:0016607">
    <property type="term" value="C:nuclear speck"/>
    <property type="evidence" value="ECO:0007669"/>
    <property type="project" value="UniProtKB-SubCell"/>
</dbReference>
<dbReference type="GO" id="GO:0005654">
    <property type="term" value="C:nucleoplasm"/>
    <property type="evidence" value="ECO:0000314"/>
    <property type="project" value="HPA"/>
</dbReference>
<dbReference type="GO" id="GO:0005634">
    <property type="term" value="C:nucleus"/>
    <property type="evidence" value="ECO:0007005"/>
    <property type="project" value="UniProtKB"/>
</dbReference>
<dbReference type="GO" id="GO:1990111">
    <property type="term" value="C:spermatoproteasome complex"/>
    <property type="evidence" value="ECO:0000250"/>
    <property type="project" value="UniProtKB"/>
</dbReference>
<dbReference type="GO" id="GO:0070577">
    <property type="term" value="F:lysine-acetylated histone binding"/>
    <property type="evidence" value="ECO:0000318"/>
    <property type="project" value="GO_Central"/>
</dbReference>
<dbReference type="GO" id="GO:0016504">
    <property type="term" value="F:peptidase activator activity"/>
    <property type="evidence" value="ECO:0000250"/>
    <property type="project" value="UniProtKB"/>
</dbReference>
<dbReference type="GO" id="GO:0070628">
    <property type="term" value="F:proteasome binding"/>
    <property type="evidence" value="ECO:0000318"/>
    <property type="project" value="GO_Central"/>
</dbReference>
<dbReference type="GO" id="GO:0006974">
    <property type="term" value="P:DNA damage response"/>
    <property type="evidence" value="ECO:0000250"/>
    <property type="project" value="UniProtKB"/>
</dbReference>
<dbReference type="GO" id="GO:0006281">
    <property type="term" value="P:DNA repair"/>
    <property type="evidence" value="ECO:0000250"/>
    <property type="project" value="UniProtKB"/>
</dbReference>
<dbReference type="GO" id="GO:0010499">
    <property type="term" value="P:proteasomal ubiquitin-independent protein catabolic process"/>
    <property type="evidence" value="ECO:0000250"/>
    <property type="project" value="UniProtKB"/>
</dbReference>
<dbReference type="GO" id="GO:0035092">
    <property type="term" value="P:sperm DNA condensation"/>
    <property type="evidence" value="ECO:0000250"/>
    <property type="project" value="UniProtKB"/>
</dbReference>
<dbReference type="FunFam" id="1.25.10.10:FF:000183">
    <property type="entry name" value="Proteasome activator complex subunit 4"/>
    <property type="match status" value="1"/>
</dbReference>
<dbReference type="Gene3D" id="1.25.10.10">
    <property type="entry name" value="Leucine-rich Repeat Variant"/>
    <property type="match status" value="1"/>
</dbReference>
<dbReference type="InterPro" id="IPR011989">
    <property type="entry name" value="ARM-like"/>
</dbReference>
<dbReference type="InterPro" id="IPR016024">
    <property type="entry name" value="ARM-type_fold"/>
</dbReference>
<dbReference type="InterPro" id="IPR032430">
    <property type="entry name" value="Blm10_mid"/>
</dbReference>
<dbReference type="InterPro" id="IPR055455">
    <property type="entry name" value="HEAT_PSME4"/>
</dbReference>
<dbReference type="InterPro" id="IPR035309">
    <property type="entry name" value="PSME4"/>
</dbReference>
<dbReference type="InterPro" id="IPR021843">
    <property type="entry name" value="PSME4_C"/>
</dbReference>
<dbReference type="PANTHER" id="PTHR32170">
    <property type="entry name" value="PROTEASOME ACTIVATOR COMPLEX SUBUNIT 4"/>
    <property type="match status" value="1"/>
</dbReference>
<dbReference type="PANTHER" id="PTHR32170:SF3">
    <property type="entry name" value="PROTEASOME ACTIVATOR COMPLEX SUBUNIT 4"/>
    <property type="match status" value="1"/>
</dbReference>
<dbReference type="Pfam" id="PF23096">
    <property type="entry name" value="HEAT_PSME4"/>
    <property type="match status" value="1"/>
</dbReference>
<dbReference type="Pfam" id="PF16507">
    <property type="entry name" value="HEAT_PSME4_mid"/>
    <property type="match status" value="1"/>
</dbReference>
<dbReference type="Pfam" id="PF11919">
    <property type="entry name" value="PSME4_C"/>
    <property type="match status" value="1"/>
</dbReference>
<dbReference type="SUPFAM" id="SSF48371">
    <property type="entry name" value="ARM repeat"/>
    <property type="match status" value="2"/>
</dbReference>
<evidence type="ECO:0000250" key="1"/>
<evidence type="ECO:0000256" key="2">
    <source>
        <dbReference type="SAM" id="MobiDB-lite"/>
    </source>
</evidence>
<evidence type="ECO:0000269" key="3">
    <source>
    </source>
</evidence>
<evidence type="ECO:0000269" key="4">
    <source>
    </source>
</evidence>
<evidence type="ECO:0000269" key="5">
    <source>
    </source>
</evidence>
<evidence type="ECO:0000269" key="6">
    <source>
    </source>
</evidence>
<evidence type="ECO:0000303" key="7">
    <source>
    </source>
</evidence>
<evidence type="ECO:0000303" key="8">
    <source>
    </source>
</evidence>
<evidence type="ECO:0000303" key="9">
    <source ref="1"/>
</evidence>
<evidence type="ECO:0000305" key="10"/>
<evidence type="ECO:0000312" key="11">
    <source>
        <dbReference type="HGNC" id="HGNC:20635"/>
    </source>
</evidence>
<evidence type="ECO:0007744" key="12">
    <source>
    </source>
</evidence>
<evidence type="ECO:0007744" key="13">
    <source>
    </source>
</evidence>
<evidence type="ECO:0007829" key="14">
    <source>
        <dbReference type="PDB" id="6KWY"/>
    </source>
</evidence>
<evidence type="ECO:0007829" key="15">
    <source>
        <dbReference type="PDB" id="6REY"/>
    </source>
</evidence>
<evidence type="ECO:0007829" key="16">
    <source>
        <dbReference type="PDB" id="7NAQ"/>
    </source>
</evidence>
<evidence type="ECO:0007829" key="17">
    <source>
        <dbReference type="PDB" id="8CVS"/>
    </source>
</evidence>
<gene>
    <name evidence="11" type="primary">PSME4</name>
    <name evidence="8" type="synonym">BLM10</name>
    <name type="synonym">KIAA0077</name>
</gene>
<organism>
    <name type="scientific">Homo sapiens</name>
    <name type="common">Human</name>
    <dbReference type="NCBI Taxonomy" id="9606"/>
    <lineage>
        <taxon>Eukaryota</taxon>
        <taxon>Metazoa</taxon>
        <taxon>Chordata</taxon>
        <taxon>Craniata</taxon>
        <taxon>Vertebrata</taxon>
        <taxon>Euteleostomi</taxon>
        <taxon>Mammalia</taxon>
        <taxon>Eutheria</taxon>
        <taxon>Euarchontoglires</taxon>
        <taxon>Primates</taxon>
        <taxon>Haplorrhini</taxon>
        <taxon>Catarrhini</taxon>
        <taxon>Hominidae</taxon>
        <taxon>Homo</taxon>
    </lineage>
</organism>
<keyword id="KW-0002">3D-structure</keyword>
<keyword id="KW-0025">Alternative splicing</keyword>
<keyword id="KW-0963">Cytoplasm</keyword>
<keyword id="KW-0217">Developmental protein</keyword>
<keyword id="KW-0221">Differentiation</keyword>
<keyword id="KW-0227">DNA damage</keyword>
<keyword id="KW-0234">DNA repair</keyword>
<keyword id="KW-0539">Nucleus</keyword>
<keyword id="KW-0597">Phosphoprotein</keyword>
<keyword id="KW-0647">Proteasome</keyword>
<keyword id="KW-1267">Proteomics identification</keyword>
<keyword id="KW-1185">Reference proteome</keyword>
<keyword id="KW-0677">Repeat</keyword>
<keyword id="KW-0744">Spermatogenesis</keyword>
<comment type="function">
    <text evidence="3 4 5 6">Associated component of the proteasome that specifically recognizes acetylated histones and promotes ATP- and ubiquitin-independent degradation of core histones during spermatogenesis and DNA damage response. Recognizes and binds acetylated histones via its bromodomain-like (BRDL) region and activates the proteasome by opening the gated channel for substrate entry. Binds to the core proteasome via its C-terminus, which occupies the same binding sites as the proteasomal ATPases, opening the closed structure of the proteasome via an active gating mechanism. Component of the spermatoproteasome, a form of the proteasome specifically found in testis: binds to acetylated histones and promotes degradation of histones, thereby participating actively to the exchange of histones during spermatogenesis. Also involved in DNA damage response in somatic cells, by promoting degradation of histones following DNA double-strand breaks.</text>
</comment>
<comment type="subunit">
    <text evidence="3">Homodimer. Interacts with the 20S and 26S proteasomes. Component of the spermatoproteasome, a form of the proteasome specifically found in testis.</text>
</comment>
<comment type="interaction">
    <interactant intactId="EBI-1236916">
        <id>Q14997</id>
    </interactant>
    <interactant intactId="EBI-739580">
        <id>Q13137</id>
        <label>CALCOCO2</label>
    </interactant>
    <organismsDiffer>false</organismsDiffer>
    <experiments>3</experiments>
</comment>
<comment type="interaction">
    <interactant intactId="EBI-1236916">
        <id>Q14997</id>
    </interactant>
    <interactant intactId="EBI-10178410">
        <id>Q86Y26</id>
        <label>NUTM1</label>
    </interactant>
    <organismsDiffer>false</organismsDiffer>
    <experiments>3</experiments>
</comment>
<comment type="interaction">
    <interactant intactId="EBI-1236916">
        <id>Q14997</id>
    </interactant>
    <interactant intactId="EBI-357669">
        <id>P62333</id>
        <label>PSMC6</label>
    </interactant>
    <organismsDiffer>false</organismsDiffer>
    <experiments>2</experiments>
</comment>
<comment type="subcellular location">
    <subcellularLocation>
        <location evidence="1">Cytoplasm</location>
        <location evidence="1">Cytosol</location>
    </subcellularLocation>
    <subcellularLocation>
        <location evidence="3">Nucleus</location>
    </subcellularLocation>
    <subcellularLocation>
        <location evidence="1">Nucleus speckle</location>
    </subcellularLocation>
    <text>Found in nuclear foci following treatment with ionizing radiation, but not with ultraviolet irradiation or H(2)O(2).</text>
</comment>
<comment type="alternative products">
    <event type="alternative splicing"/>
    <isoform>
        <id>Q14997-1</id>
        <name>1</name>
        <sequence type="displayed"/>
    </isoform>
    <isoform>
        <id>Q14997-2</id>
        <name>2</name>
        <sequence type="described" ref="VSP_023878"/>
    </isoform>
    <isoform>
        <id>Q14997-3</id>
        <name>3</name>
        <sequence type="described" ref="VSP_023877 VSP_023879"/>
    </isoform>
    <isoform>
        <id>Q14997-4</id>
        <name>4</name>
        <sequence type="described" ref="VSP_023876"/>
    </isoform>
</comment>
<comment type="domain">
    <text evidence="6">The bromodomain-like (BRDL) region specifically recognizes and binds acetylated histones.</text>
</comment>
<comment type="similarity">
    <text evidence="10">Belongs to the BLM10 family.</text>
</comment>
<comment type="sequence caution" evidence="10">
    <conflict type="erroneous initiation">
        <sequence resource="EMBL-CDS" id="AAI12170"/>
    </conflict>
</comment>
<comment type="sequence caution" evidence="10">
    <conflict type="erroneous initiation">
        <sequence resource="EMBL-CDS" id="AAI13669"/>
    </conflict>
</comment>
<proteinExistence type="evidence at protein level"/>
<sequence>MEPAERAGVGEPPEPGGRPEPGPRGFVPQKEIVYNKLLPYAERLDAESDLQLAQIKCNLGRAVQLQELWPGGLFWTRKLSTYIRLYGRKFSKEDHVLFIKLLYELVSIPKLEISMMQGFARLLINLLKKKELLSRADLELPWRPLYDMVERILYSKTEHLGLNWFPNSVENILKTLVKSCRPYFPADATAEMLEEWRPLMCPFDVTMQKAITYFEIFLPTSLPPELHHKGFKLWFDELIGLWVSVQNLPQWEGQLVNLFARLATDNIGYIDWDPYVPKIFTRILRSLNLPVGSSQVLVPRFLTNAYDIGHAVIWITAMMGGPSKLVQKHLAGLFNSITSFYHPSNNGRWLNKLMKLLQRLPNSVVRRLHRERYKKPSWLTPVPDSHKLTDQDVTDFVQCIIQPVLLAMFSKTGSLEAAQALQNLALMRPELVIPPVLERTYPALETLTEPHQLTATLSCVIGVARSLVSGGRWFPEGPTHMLPLLMRALPGVDPNDFSKCMITFQFIATFSTLVPLVDCSSVLQERNDLTEVERELCSATAEFEDFVLQFMDRCFGLIESSTLEQTREETETEKMTHLESLVELGLSSTFSTILTQCSKEIFMVALQKVFNFSTSHIFETRVAGRMVADMCRAAVKCCPEESLKLFVPHCCSVITQLTMNDDVLNDEELDKELLWNLQLLSEITRVDGRKLLLYREQLVKILQRTLHLTCKQGYTLSCNLLHHLLRSTTLIYPTEYCSVPGGFDKPPSEYFPIKDWGKPGDLWNLGIQWHVPSSEEVSFAFYLLDSFLQPELVKLQHCGDGKLEMSRDDILQSLTIVHNCLIGSGNLLPPLKGEPVTNLVPSMVSLEETKLYTGLEYDLSRENHREVIATVIRKLLNHILDNSEDDTKSLFLIIKIIGDLLQFQGSHKHEFDSRWKSFNLVKKSMENRLHGKKQHIRALLIDRVMLQHELRTLTVEGCEYKKIHQDMIRDLLRLSTSSYSQVRNKAQQTFFAALGAYNFCCRDIIPLVLEFLRPDRQGVTQQQFKGALYCLLGNHSGVCLANLHDWDCIVQTWPAIVSSGLSQAMSLEKPSIVRLFDDLAEKIHRQYETIGLDFTIPKSCVEIAELLQQSKNPSINQILLSPEKIKEGIKRQQEKNADALRNYENLVDTLLDGVEQRNLPWKFEHIGIGLLSLLLRDDRVLPLRAIRFFVENLNHDAIVVRKMAISAVAGILKQLKRTHKKLTINPCEISGCPKPTQIIAGDRPDNHWLHYDSKTIPRTKKEWESSCFVEKTHWGYYTWPKNMVVYAGVEEQPKLGRSREDMTEAEQIIFDHFSDPKFVEQLITFLSLEDRKGKDKFNPRRFCLFKGIFRNFDDAFLPVLKPHLEHLVADSHESTQRCVAEIIAGLIRGSKHWTFEKVEKLWELLCPLLRTALSNITVETYNDWGACIATSCESRDPRKLHWLFELLLESPLSGEGGSFVDACRLYVLQGGLAQQEWRVPELLHRLLKYLEPKLTQVYKNVRERIGSVLTYIFMIDVSLPNTTPTISPHVPEFTARILEKLKPLMDVDEEIQNHVMEENGIGEEDERTQGIKLLKTILKWLMASAGRSFSTAVTEQLQLLPLFFKIAPVENDNSYDELKRDAKLCLSLMSQGLLYPHQVPLVLQVLKQTARSSSWHARYTVLTYLQTMVFYNLFIFLNNEDAVKDIRWLVISLLEDEQLEVREMAATTLSGLLQCNFLTMDSPMQIHFEQLCKTKLPKKRKRDPGSVGDTIPSAELVKRHAGVLGLGACVLSSPYDVPTWMPQLLMNLSAHLNDPQPIEMTVKKTLSNFRRTHHDNWQEHKQQFTDDQLLVLTDLLVSPCYYA</sequence>